<proteinExistence type="inferred from homology"/>
<sequence length="286" mass="31879">MQISDFILVIIGSVALAAGVKYVFTLTSGSNKDKKGGEAEKGKQVEKALDPQEYRKFQLKEKFIVNHNTRIFRFALPNEDDILGLPIGQHISLRAVVGGKEVYRPYTPISSDEERGYFDLLIKVYEKGAMSGYVDNMFIGDSIEVKGPKGKFNYQPNMRKSIGMLAGGTGITPMLQVIKAILKNPSDKTEISLVFGNITEEDILLKKELDELAEKHPQFKVYYVLNNPPKGWTQGVGFVSKEIIESRLPSPSDQTMVIMCGPPMMNKAMTGHLETIGFNESNIFTF</sequence>
<organism>
    <name type="scientific">Dictyostelium discoideum</name>
    <name type="common">Social amoeba</name>
    <dbReference type="NCBI Taxonomy" id="44689"/>
    <lineage>
        <taxon>Eukaryota</taxon>
        <taxon>Amoebozoa</taxon>
        <taxon>Evosea</taxon>
        <taxon>Eumycetozoa</taxon>
        <taxon>Dictyostelia</taxon>
        <taxon>Dictyosteliales</taxon>
        <taxon>Dictyosteliaceae</taxon>
        <taxon>Dictyostelium</taxon>
    </lineage>
</organism>
<feature type="chain" id="PRO_0000367255" description="NADH-cytochrome b5 reductase 1">
    <location>
        <begin position="1"/>
        <end position="286"/>
    </location>
</feature>
<feature type="transmembrane region" description="Helical" evidence="2">
    <location>
        <begin position="6"/>
        <end position="26"/>
    </location>
</feature>
<feature type="domain" description="FAD-binding FR-type" evidence="3">
    <location>
        <begin position="52"/>
        <end position="155"/>
    </location>
</feature>
<feature type="binding site" evidence="1">
    <location>
        <begin position="135"/>
        <end position="150"/>
    </location>
    <ligand>
        <name>FAD</name>
        <dbReference type="ChEBI" id="CHEBI:57692"/>
    </ligand>
</feature>
<feature type="binding site" evidence="1">
    <location>
        <begin position="161"/>
        <end position="193"/>
    </location>
    <ligand>
        <name>FAD</name>
        <dbReference type="ChEBI" id="CHEBI:57692"/>
    </ligand>
</feature>
<protein>
    <recommendedName>
        <fullName>NADH-cytochrome b5 reductase 1</fullName>
        <ecNumber>1.6.2.2</ecNumber>
    </recommendedName>
</protein>
<accession>Q54NC1</accession>
<reference key="1">
    <citation type="journal article" date="2005" name="Nature">
        <title>The genome of the social amoeba Dictyostelium discoideum.</title>
        <authorList>
            <person name="Eichinger L."/>
            <person name="Pachebat J.A."/>
            <person name="Gloeckner G."/>
            <person name="Rajandream M.A."/>
            <person name="Sucgang R."/>
            <person name="Berriman M."/>
            <person name="Song J."/>
            <person name="Olsen R."/>
            <person name="Szafranski K."/>
            <person name="Xu Q."/>
            <person name="Tunggal B."/>
            <person name="Kummerfeld S."/>
            <person name="Madera M."/>
            <person name="Konfortov B.A."/>
            <person name="Rivero F."/>
            <person name="Bankier A.T."/>
            <person name="Lehmann R."/>
            <person name="Hamlin N."/>
            <person name="Davies R."/>
            <person name="Gaudet P."/>
            <person name="Fey P."/>
            <person name="Pilcher K."/>
            <person name="Chen G."/>
            <person name="Saunders D."/>
            <person name="Sodergren E.J."/>
            <person name="Davis P."/>
            <person name="Kerhornou A."/>
            <person name="Nie X."/>
            <person name="Hall N."/>
            <person name="Anjard C."/>
            <person name="Hemphill L."/>
            <person name="Bason N."/>
            <person name="Farbrother P."/>
            <person name="Desany B."/>
            <person name="Just E."/>
            <person name="Morio T."/>
            <person name="Rost R."/>
            <person name="Churcher C.M."/>
            <person name="Cooper J."/>
            <person name="Haydock S."/>
            <person name="van Driessche N."/>
            <person name="Cronin A."/>
            <person name="Goodhead I."/>
            <person name="Muzny D.M."/>
            <person name="Mourier T."/>
            <person name="Pain A."/>
            <person name="Lu M."/>
            <person name="Harper D."/>
            <person name="Lindsay R."/>
            <person name="Hauser H."/>
            <person name="James K.D."/>
            <person name="Quiles M."/>
            <person name="Madan Babu M."/>
            <person name="Saito T."/>
            <person name="Buchrieser C."/>
            <person name="Wardroper A."/>
            <person name="Felder M."/>
            <person name="Thangavelu M."/>
            <person name="Johnson D."/>
            <person name="Knights A."/>
            <person name="Loulseged H."/>
            <person name="Mungall K.L."/>
            <person name="Oliver K."/>
            <person name="Price C."/>
            <person name="Quail M.A."/>
            <person name="Urushihara H."/>
            <person name="Hernandez J."/>
            <person name="Rabbinowitsch E."/>
            <person name="Steffen D."/>
            <person name="Sanders M."/>
            <person name="Ma J."/>
            <person name="Kohara Y."/>
            <person name="Sharp S."/>
            <person name="Simmonds M.N."/>
            <person name="Spiegler S."/>
            <person name="Tivey A."/>
            <person name="Sugano S."/>
            <person name="White B."/>
            <person name="Walker D."/>
            <person name="Woodward J.R."/>
            <person name="Winckler T."/>
            <person name="Tanaka Y."/>
            <person name="Shaulsky G."/>
            <person name="Schleicher M."/>
            <person name="Weinstock G.M."/>
            <person name="Rosenthal A."/>
            <person name="Cox E.C."/>
            <person name="Chisholm R.L."/>
            <person name="Gibbs R.A."/>
            <person name="Loomis W.F."/>
            <person name="Platzer M."/>
            <person name="Kay R.R."/>
            <person name="Williams J.G."/>
            <person name="Dear P.H."/>
            <person name="Noegel A.A."/>
            <person name="Barrell B.G."/>
            <person name="Kuspa A."/>
        </authorList>
    </citation>
    <scope>NUCLEOTIDE SEQUENCE [LARGE SCALE GENOMIC DNA]</scope>
    <source>
        <strain>AX4</strain>
    </source>
</reference>
<name>NCB5R_DICDI</name>
<gene>
    <name type="primary">cyb5r1</name>
    <name type="ORF">DDB_G0285399</name>
</gene>
<comment type="function">
    <text evidence="1">Electron donor reductase for cytochrome b5. The cytochrome b5/NADH cytochrome b5 reductase electron transfer system supports the catalytic activity of several sterol biosynthetic enzymes (By similarity).</text>
</comment>
<comment type="catalytic activity">
    <reaction>
        <text>2 Fe(III)-[cytochrome b5] + NADH = 2 Fe(II)-[cytochrome b5] + NAD(+) + H(+)</text>
        <dbReference type="Rhea" id="RHEA:46680"/>
        <dbReference type="Rhea" id="RHEA-COMP:10438"/>
        <dbReference type="Rhea" id="RHEA-COMP:10439"/>
        <dbReference type="ChEBI" id="CHEBI:15378"/>
        <dbReference type="ChEBI" id="CHEBI:29033"/>
        <dbReference type="ChEBI" id="CHEBI:29034"/>
        <dbReference type="ChEBI" id="CHEBI:57540"/>
        <dbReference type="ChEBI" id="CHEBI:57945"/>
        <dbReference type="EC" id="1.6.2.2"/>
    </reaction>
</comment>
<comment type="cofactor">
    <cofactor evidence="1">
        <name>FAD</name>
        <dbReference type="ChEBI" id="CHEBI:57692"/>
    </cofactor>
</comment>
<comment type="subunit">
    <text evidence="1">Monomer.</text>
</comment>
<comment type="subcellular location">
    <subcellularLocation>
        <location evidence="1">Endoplasmic reticulum membrane</location>
        <topology evidence="1">Single-pass membrane protein</topology>
    </subcellularLocation>
    <subcellularLocation>
        <location evidence="1">Mitochondrion outer membrane</location>
        <topology evidence="1">Single-pass membrane protein</topology>
    </subcellularLocation>
</comment>
<comment type="similarity">
    <text evidence="4">Belongs to the flavoprotein pyridine nucleotide cytochrome reductase family.</text>
</comment>
<evidence type="ECO:0000250" key="1"/>
<evidence type="ECO:0000255" key="2"/>
<evidence type="ECO:0000255" key="3">
    <source>
        <dbReference type="PROSITE-ProRule" id="PRU00716"/>
    </source>
</evidence>
<evidence type="ECO:0000305" key="4"/>
<keyword id="KW-0256">Endoplasmic reticulum</keyword>
<keyword id="KW-0274">FAD</keyword>
<keyword id="KW-0285">Flavoprotein</keyword>
<keyword id="KW-0472">Membrane</keyword>
<keyword id="KW-0496">Mitochondrion</keyword>
<keyword id="KW-1000">Mitochondrion outer membrane</keyword>
<keyword id="KW-0520">NAD</keyword>
<keyword id="KW-0560">Oxidoreductase</keyword>
<keyword id="KW-1185">Reference proteome</keyword>
<keyword id="KW-0812">Transmembrane</keyword>
<keyword id="KW-1133">Transmembrane helix</keyword>
<dbReference type="EC" id="1.6.2.2"/>
<dbReference type="EMBL" id="AAFI02000079">
    <property type="protein sequence ID" value="EAL64774.1"/>
    <property type="molecule type" value="Genomic_DNA"/>
</dbReference>
<dbReference type="RefSeq" id="XP_638259.1">
    <property type="nucleotide sequence ID" value="XM_633167.1"/>
</dbReference>
<dbReference type="SMR" id="Q54NC1"/>
<dbReference type="FunCoup" id="Q54NC1">
    <property type="interactions" value="438"/>
</dbReference>
<dbReference type="STRING" id="44689.Q54NC1"/>
<dbReference type="PaxDb" id="44689-DDB0266821"/>
<dbReference type="EnsemblProtists" id="EAL64774">
    <property type="protein sequence ID" value="EAL64774"/>
    <property type="gene ID" value="DDB_G0285399"/>
</dbReference>
<dbReference type="GeneID" id="8625067"/>
<dbReference type="KEGG" id="ddi:DDB_G0285399"/>
<dbReference type="dictyBase" id="DDB_G0285399">
    <property type="gene designation" value="cyb5r1"/>
</dbReference>
<dbReference type="VEuPathDB" id="AmoebaDB:DDB_G0285399"/>
<dbReference type="eggNOG" id="KOG0534">
    <property type="taxonomic scope" value="Eukaryota"/>
</dbReference>
<dbReference type="HOGENOM" id="CLU_003827_9_2_1"/>
<dbReference type="InParanoid" id="Q54NC1"/>
<dbReference type="OMA" id="VQIFMCG"/>
<dbReference type="PhylomeDB" id="Q54NC1"/>
<dbReference type="Reactome" id="R-DDI-114608">
    <property type="pathway name" value="Platelet degranulation"/>
</dbReference>
<dbReference type="Reactome" id="R-DDI-196836">
    <property type="pathway name" value="Vitamin C (ascorbate) metabolism"/>
</dbReference>
<dbReference type="Reactome" id="R-DDI-211945">
    <property type="pathway name" value="Phase I - Functionalization of compounds"/>
</dbReference>
<dbReference type="Reactome" id="R-DDI-6798695">
    <property type="pathway name" value="Neutrophil degranulation"/>
</dbReference>
<dbReference type="PRO" id="PR:Q54NC1"/>
<dbReference type="Proteomes" id="UP000002195">
    <property type="component" value="Chromosome 4"/>
</dbReference>
<dbReference type="GO" id="GO:0005789">
    <property type="term" value="C:endoplasmic reticulum membrane"/>
    <property type="evidence" value="ECO:0007669"/>
    <property type="project" value="UniProtKB-SubCell"/>
</dbReference>
<dbReference type="GO" id="GO:0005741">
    <property type="term" value="C:mitochondrial outer membrane"/>
    <property type="evidence" value="ECO:0007669"/>
    <property type="project" value="UniProtKB-SubCell"/>
</dbReference>
<dbReference type="GO" id="GO:0004128">
    <property type="term" value="F:cytochrome-b5 reductase activity, acting on NAD(P)H"/>
    <property type="evidence" value="ECO:0007669"/>
    <property type="project" value="UniProtKB-EC"/>
</dbReference>
<dbReference type="CDD" id="cd06183">
    <property type="entry name" value="cyt_b5_reduct_like"/>
    <property type="match status" value="1"/>
</dbReference>
<dbReference type="FunFam" id="2.40.30.10:FF:000032">
    <property type="entry name" value="NADH-cytochrome b5 reductase"/>
    <property type="match status" value="1"/>
</dbReference>
<dbReference type="FunFam" id="3.40.50.80:FF:000019">
    <property type="entry name" value="NADH-cytochrome b5 reductase"/>
    <property type="match status" value="1"/>
</dbReference>
<dbReference type="Gene3D" id="3.40.50.80">
    <property type="entry name" value="Nucleotide-binding domain of ferredoxin-NADP reductase (FNR) module"/>
    <property type="match status" value="1"/>
</dbReference>
<dbReference type="Gene3D" id="2.40.30.10">
    <property type="entry name" value="Translation factors"/>
    <property type="match status" value="1"/>
</dbReference>
<dbReference type="InterPro" id="IPR001834">
    <property type="entry name" value="CBR-like"/>
</dbReference>
<dbReference type="InterPro" id="IPR008333">
    <property type="entry name" value="Cbr1-like_FAD-bd_dom"/>
</dbReference>
<dbReference type="InterPro" id="IPR017927">
    <property type="entry name" value="FAD-bd_FR_type"/>
</dbReference>
<dbReference type="InterPro" id="IPR001709">
    <property type="entry name" value="Flavoprot_Pyr_Nucl_cyt_Rdtase"/>
</dbReference>
<dbReference type="InterPro" id="IPR039261">
    <property type="entry name" value="FNR_nucleotide-bd"/>
</dbReference>
<dbReference type="InterPro" id="IPR001433">
    <property type="entry name" value="OxRdtase_FAD/NAD-bd"/>
</dbReference>
<dbReference type="InterPro" id="IPR017938">
    <property type="entry name" value="Riboflavin_synthase-like_b-brl"/>
</dbReference>
<dbReference type="PANTHER" id="PTHR19370">
    <property type="entry name" value="NADH-CYTOCHROME B5 REDUCTASE"/>
    <property type="match status" value="1"/>
</dbReference>
<dbReference type="PANTHER" id="PTHR19370:SF184">
    <property type="entry name" value="NADH-CYTOCHROME B5 REDUCTASE-LIKE"/>
    <property type="match status" value="1"/>
</dbReference>
<dbReference type="Pfam" id="PF00970">
    <property type="entry name" value="FAD_binding_6"/>
    <property type="match status" value="1"/>
</dbReference>
<dbReference type="Pfam" id="PF00175">
    <property type="entry name" value="NAD_binding_1"/>
    <property type="match status" value="1"/>
</dbReference>
<dbReference type="PRINTS" id="PR00406">
    <property type="entry name" value="CYTB5RDTASE"/>
</dbReference>
<dbReference type="PRINTS" id="PR00371">
    <property type="entry name" value="FPNCR"/>
</dbReference>
<dbReference type="SUPFAM" id="SSF52343">
    <property type="entry name" value="Ferredoxin reductase-like, C-terminal NADP-linked domain"/>
    <property type="match status" value="1"/>
</dbReference>
<dbReference type="SUPFAM" id="SSF63380">
    <property type="entry name" value="Riboflavin synthase domain-like"/>
    <property type="match status" value="1"/>
</dbReference>
<dbReference type="PROSITE" id="PS51384">
    <property type="entry name" value="FAD_FR"/>
    <property type="match status" value="1"/>
</dbReference>